<evidence type="ECO:0000255" key="1">
    <source>
        <dbReference type="PROSITE-ProRule" id="PRU01136"/>
    </source>
</evidence>
<evidence type="ECO:0000255" key="2">
    <source>
        <dbReference type="PROSITE-ProRule" id="PRU01137"/>
    </source>
</evidence>
<evidence type="ECO:0000256" key="3">
    <source>
        <dbReference type="SAM" id="MobiDB-lite"/>
    </source>
</evidence>
<evidence type="ECO:0000269" key="4">
    <source>
    </source>
</evidence>
<evidence type="ECO:0000269" key="5">
    <source>
    </source>
</evidence>
<evidence type="ECO:0000269" key="6">
    <source>
    </source>
</evidence>
<evidence type="ECO:0000269" key="7">
    <source>
    </source>
</evidence>
<evidence type="ECO:0000269" key="8">
    <source>
    </source>
</evidence>
<evidence type="ECO:0000269" key="9">
    <source>
    </source>
</evidence>
<evidence type="ECO:0000303" key="10">
    <source>
    </source>
</evidence>
<evidence type="ECO:0000305" key="11"/>
<evidence type="ECO:0000305" key="12">
    <source>
    </source>
</evidence>
<evidence type="ECO:0000305" key="13">
    <source>
    </source>
</evidence>
<evidence type="ECO:0007744" key="14">
    <source>
        <dbReference type="PDB" id="2A7S"/>
    </source>
</evidence>
<evidence type="ECO:0007744" key="15">
    <source>
        <dbReference type="PDB" id="2BZR"/>
    </source>
</evidence>
<evidence type="ECO:0007829" key="16">
    <source>
        <dbReference type="PDB" id="2A7S"/>
    </source>
</evidence>
<evidence type="ECO:0007829" key="17">
    <source>
        <dbReference type="PDB" id="2BZR"/>
    </source>
</evidence>
<protein>
    <recommendedName>
        <fullName evidence="11">Biotin-dependent acetyl-/propionyl-coenzyme A carboxylase beta5 subunit</fullName>
    </recommendedName>
    <alternativeName>
        <fullName evidence="11">Acetyl-CoA carboxylase</fullName>
        <shortName evidence="11">ACC</shortName>
        <ecNumber evidence="4 5 9">2.1.3.15</ecNumber>
    </alternativeName>
    <alternativeName>
        <fullName evidence="11">Propionyl-CoA carboxylase</fullName>
        <shortName evidence="11">PCC</shortName>
        <ecNumber evidence="4 5 9">2.1.3.-</ecNumber>
    </alternativeName>
</protein>
<organism>
    <name type="scientific">Mycobacterium tuberculosis (strain ATCC 25618 / H37Rv)</name>
    <dbReference type="NCBI Taxonomy" id="83332"/>
    <lineage>
        <taxon>Bacteria</taxon>
        <taxon>Bacillati</taxon>
        <taxon>Actinomycetota</taxon>
        <taxon>Actinomycetes</taxon>
        <taxon>Mycobacteriales</taxon>
        <taxon>Mycobacteriaceae</taxon>
        <taxon>Mycobacterium</taxon>
        <taxon>Mycobacterium tuberculosis complex</taxon>
    </lineage>
</organism>
<sequence>MTSVTDRSAHSAERSTEHTIDIHTTAGKLAELHKRREESLHPVGEDAVEKVHAKGKLTARERIYALLDEDSFVELDALAKHRSTNFNLGEKRPLGDGVVTGYGTIDGRDVCIFSQDATVFGGSLGEVYGEKIVKVQELAIKTGRPLIGINDGAGARIQEGVVSLGLYSRIFRNNILASGVIPQISLIMGAAAGGHVYSPALTDFVIMVDQTSQMFITGPDVIKTVTGEEVTMEELGGAHTHMAKSGTAHYAASGEQDAFDYVRELLSYLPPNNSTDAPRYQAAAPTGPIEENLTDEDLELDTLIPDSPNQPYDMHEVITRLLDDEFLEIQAGYAQNIVVGFGRIDGRPVGIVANQPTHFAGCLDINASEKAARFVRTCDCFNIPIVMLVDVPGFLPGTDQEYNGIIRRGAKLLYAYGEATVPKITVITRKAYGGAYCVMGSKDMGCDVNLAWPTAQIAVMGASGAVGFVYRQQLAEAAANGEDIDKLRLRLQQEYEDTLVNPYVAAERGYVDAVIPPSHTRGYIGTALRLLERKIAQLPPKKHGNVPL</sequence>
<name>ACCD5_MYCTU</name>
<gene>
    <name evidence="10" type="primary">accD5</name>
    <name type="synonym">pccB</name>
    <name type="ordered locus">Rv3280</name>
    <name type="ORF">MTCY71.20</name>
</gene>
<accession>P9WQH7</accession>
<accession>L0TF57</accession>
<accession>P96885</accession>
<keyword id="KW-0002">3D-structure</keyword>
<keyword id="KW-0903">Direct protein sequencing</keyword>
<keyword id="KW-0443">Lipid metabolism</keyword>
<keyword id="KW-1185">Reference proteome</keyword>
<keyword id="KW-0808">Transferase</keyword>
<proteinExistence type="evidence at protein level"/>
<dbReference type="EC" id="2.1.3.15" evidence="4 5 9"/>
<dbReference type="EC" id="2.1.3.-" evidence="4 5 9"/>
<dbReference type="EMBL" id="AL123456">
    <property type="protein sequence ID" value="CCP46099.1"/>
    <property type="molecule type" value="Genomic_DNA"/>
</dbReference>
<dbReference type="PIR" id="A70980">
    <property type="entry name" value="A70980"/>
</dbReference>
<dbReference type="RefSeq" id="NP_217797.1">
    <property type="nucleotide sequence ID" value="NC_000962.3"/>
</dbReference>
<dbReference type="RefSeq" id="WP_003417136.1">
    <property type="nucleotide sequence ID" value="NZ_NVQJ01000003.1"/>
</dbReference>
<dbReference type="PDB" id="2A7S">
    <property type="method" value="X-ray"/>
    <property type="resolution" value="2.90 A"/>
    <property type="chains" value="A/B/C/D/E/F=1-548"/>
</dbReference>
<dbReference type="PDB" id="2BZR">
    <property type="method" value="X-ray"/>
    <property type="resolution" value="2.20 A"/>
    <property type="chains" value="A/B/C/D/E/F=1-548"/>
</dbReference>
<dbReference type="PDBsum" id="2A7S"/>
<dbReference type="PDBsum" id="2BZR"/>
<dbReference type="SMR" id="P9WQH7"/>
<dbReference type="FunCoup" id="P9WQH7">
    <property type="interactions" value="331"/>
</dbReference>
<dbReference type="MINT" id="P9WQH7"/>
<dbReference type="STRING" id="83332.Rv3280"/>
<dbReference type="PaxDb" id="83332-Rv3280"/>
<dbReference type="DNASU" id="888725"/>
<dbReference type="GeneID" id="888725"/>
<dbReference type="KEGG" id="mtu:Rv3280"/>
<dbReference type="KEGG" id="mtv:RVBD_3280"/>
<dbReference type="TubercuList" id="Rv3280"/>
<dbReference type="eggNOG" id="COG4799">
    <property type="taxonomic scope" value="Bacteria"/>
</dbReference>
<dbReference type="InParanoid" id="P9WQH7"/>
<dbReference type="OrthoDB" id="4434131at2"/>
<dbReference type="PhylomeDB" id="P9WQH7"/>
<dbReference type="BioCyc" id="MetaCyc:G185E-7554-MONOMER"/>
<dbReference type="SABIO-RK" id="P9WQH7"/>
<dbReference type="UniPathway" id="UPA00915"/>
<dbReference type="EvolutionaryTrace" id="P9WQH7"/>
<dbReference type="Proteomes" id="UP000001584">
    <property type="component" value="Chromosome"/>
</dbReference>
<dbReference type="GO" id="GO:0009317">
    <property type="term" value="C:acetyl-CoA carboxylase complex"/>
    <property type="evidence" value="ECO:0000314"/>
    <property type="project" value="MTBBASE"/>
</dbReference>
<dbReference type="GO" id="GO:0009274">
    <property type="term" value="C:peptidoglycan-based cell wall"/>
    <property type="evidence" value="ECO:0007005"/>
    <property type="project" value="MTBBASE"/>
</dbReference>
<dbReference type="GO" id="GO:0005886">
    <property type="term" value="C:plasma membrane"/>
    <property type="evidence" value="ECO:0007005"/>
    <property type="project" value="MTBBASE"/>
</dbReference>
<dbReference type="GO" id="GO:0032991">
    <property type="term" value="C:protein-containing complex"/>
    <property type="evidence" value="ECO:0000353"/>
    <property type="project" value="MTBBASE"/>
</dbReference>
<dbReference type="GO" id="GO:0003989">
    <property type="term" value="F:acetyl-CoA carboxylase activity"/>
    <property type="evidence" value="ECO:0000314"/>
    <property type="project" value="MTBBASE"/>
</dbReference>
<dbReference type="GO" id="GO:0042802">
    <property type="term" value="F:identical protein binding"/>
    <property type="evidence" value="ECO:0000353"/>
    <property type="project" value="IntAct"/>
</dbReference>
<dbReference type="GO" id="GO:0004658">
    <property type="term" value="F:propionyl-CoA carboxylase activity"/>
    <property type="evidence" value="ECO:0000314"/>
    <property type="project" value="MTBBASE"/>
</dbReference>
<dbReference type="GO" id="GO:0016740">
    <property type="term" value="F:transferase activity"/>
    <property type="evidence" value="ECO:0007669"/>
    <property type="project" value="UniProtKB-KW"/>
</dbReference>
<dbReference type="GO" id="GO:0015977">
    <property type="term" value="P:carbon fixation"/>
    <property type="evidence" value="ECO:0000314"/>
    <property type="project" value="MTBBASE"/>
</dbReference>
<dbReference type="GO" id="GO:0006629">
    <property type="term" value="P:lipid metabolic process"/>
    <property type="evidence" value="ECO:0007669"/>
    <property type="project" value="UniProtKB-KW"/>
</dbReference>
<dbReference type="FunFam" id="3.90.226.10:FF:000017">
    <property type="entry name" value="Propionyl-CoA carboxylase subunit beta 5"/>
    <property type="match status" value="1"/>
</dbReference>
<dbReference type="FunFam" id="3.90.226.10:FF:000016">
    <property type="entry name" value="Propionyl-CoA carboxylase, beta subunit"/>
    <property type="match status" value="1"/>
</dbReference>
<dbReference type="Gene3D" id="3.90.226.10">
    <property type="entry name" value="2-enoyl-CoA Hydratase, Chain A, domain 1"/>
    <property type="match status" value="2"/>
</dbReference>
<dbReference type="InterPro" id="IPR051047">
    <property type="entry name" value="AccD/PCCB"/>
</dbReference>
<dbReference type="InterPro" id="IPR034733">
    <property type="entry name" value="AcCoA_carboxyl_beta"/>
</dbReference>
<dbReference type="InterPro" id="IPR029045">
    <property type="entry name" value="ClpP/crotonase-like_dom_sf"/>
</dbReference>
<dbReference type="InterPro" id="IPR011763">
    <property type="entry name" value="COA_CT_C"/>
</dbReference>
<dbReference type="InterPro" id="IPR011762">
    <property type="entry name" value="COA_CT_N"/>
</dbReference>
<dbReference type="PANTHER" id="PTHR43842">
    <property type="entry name" value="PROPIONYL-COA CARBOXYLASE BETA CHAIN"/>
    <property type="match status" value="1"/>
</dbReference>
<dbReference type="PANTHER" id="PTHR43842:SF2">
    <property type="entry name" value="PROPIONYL-COA CARBOXYLASE BETA CHAIN, MITOCHONDRIAL"/>
    <property type="match status" value="1"/>
</dbReference>
<dbReference type="Pfam" id="PF01039">
    <property type="entry name" value="Carboxyl_trans"/>
    <property type="match status" value="1"/>
</dbReference>
<dbReference type="SUPFAM" id="SSF52096">
    <property type="entry name" value="ClpP/crotonase"/>
    <property type="match status" value="2"/>
</dbReference>
<dbReference type="PROSITE" id="PS50989">
    <property type="entry name" value="COA_CT_CTER"/>
    <property type="match status" value="1"/>
</dbReference>
<dbReference type="PROSITE" id="PS50980">
    <property type="entry name" value="COA_CT_NTER"/>
    <property type="match status" value="1"/>
</dbReference>
<comment type="function">
    <text evidence="4 5 9">Component of a biotin-dependent acyl-CoA carboxylase complex. This subunit transfers the CO2 from carboxybiotin to the CoA ester substrate (PubMed:16354663, PubMed:16385038, PubMed:28222482). When associated with the alpha3 subunit AccA3, is involved in the carboxylation of acetyl-CoA and propionyl-CoA, with a preference for propionyl-CoA (PubMed:16354663, PubMed:16385038, PubMed:28222482). Is also required for the activity of the long-chain acyl-CoA carboxylase (LCC) complex (PubMed:28222482).</text>
</comment>
<comment type="catalytic activity">
    <reaction evidence="4 5 9">
        <text>N(6)-carboxybiotinyl-L-lysyl-[protein] + acetyl-CoA = N(6)-biotinyl-L-lysyl-[protein] + malonyl-CoA</text>
        <dbReference type="Rhea" id="RHEA:54728"/>
        <dbReference type="Rhea" id="RHEA-COMP:10505"/>
        <dbReference type="Rhea" id="RHEA-COMP:10506"/>
        <dbReference type="ChEBI" id="CHEBI:57288"/>
        <dbReference type="ChEBI" id="CHEBI:57384"/>
        <dbReference type="ChEBI" id="CHEBI:83144"/>
        <dbReference type="ChEBI" id="CHEBI:83145"/>
        <dbReference type="EC" id="2.1.3.15"/>
    </reaction>
    <physiologicalReaction direction="left-to-right" evidence="4 5 9">
        <dbReference type="Rhea" id="RHEA:54729"/>
    </physiologicalReaction>
</comment>
<comment type="catalytic activity">
    <reaction evidence="4 5 9">
        <text>N(6)-carboxybiotinyl-L-lysyl-[protein] + propanoyl-CoA = methylmalonyl-CoA + N(6)-biotinyl-L-lysyl-[protein]</text>
        <dbReference type="Rhea" id="RHEA:66612"/>
        <dbReference type="Rhea" id="RHEA-COMP:10505"/>
        <dbReference type="Rhea" id="RHEA-COMP:10506"/>
        <dbReference type="ChEBI" id="CHEBI:57392"/>
        <dbReference type="ChEBI" id="CHEBI:59916"/>
        <dbReference type="ChEBI" id="CHEBI:83144"/>
        <dbReference type="ChEBI" id="CHEBI:83145"/>
    </reaction>
    <physiologicalReaction direction="left-to-right" evidence="4 5 9">
        <dbReference type="Rhea" id="RHEA:66613"/>
    </physiologicalReaction>
</comment>
<comment type="activity regulation">
    <text evidence="4 5">Carboxylase activity of the AccA3/AccD5 complex is stimulated by interaction with AccE5.</text>
</comment>
<comment type="biophysicochemical properties">
    <kinetics>
        <KM evidence="4">232 uM for acetyl-CoA (in the presence of alpha3 subunit)</KM>
        <KM evidence="4">377 uM for acetyl-CoA (in the presence of alpha3 and epsilon subunits)</KM>
        <KM evidence="9">220 uM for acetyl-CoA (in the presence of alpha3 and epsilon subunits)</KM>
        <KM evidence="4">105 uM for propionyl-CoA (in the presence of alpha3 subunit)</KM>
        <KM evidence="4">233 uM for propionyl-CoA (in the presence of alpha3 and epsilon subunits)</KM>
        <KM evidence="9">240 uM for propionyl-CoA (in the presence of alpha3 and epsilon subunits)</KM>
        <Vmax evidence="4">302.0 pmol/min/mg enzyme with acetyl-CoA as substrate (in the presence of alpha3 subunit)</Vmax>
        <Vmax evidence="4">2709.0 pmol/min/mg enzyme with acetyl-CoA as substrate (in the presence of alpha3 and epsilon subunits)</Vmax>
        <Vmax evidence="9">120.0 nmol/min/mg enzyme with acetyl-CoA as substrate (in the presence of alpha3 and epsilon subunits)</Vmax>
        <Vmax evidence="4">1095.0 pmol/min/mg enzyme with propionyl-CoA as substrate(in the presence of alpha3 subunit)</Vmax>
        <Vmax evidence="4">3442.0 pmol/min/mg enzyme with propionyl-CoA as substrate (in the presence of alpha3 and epsilon subunits)</Vmax>
        <Vmax evidence="9">680.0 nmol/min/mg enzyme with propionyl-CoA as substrate (in the presence of alpha3 and epsilon subunits)</Vmax>
    </kinetics>
</comment>
<comment type="pathway">
    <text evidence="12 13">Lipid metabolism; mycolic acid biosynthesis.</text>
</comment>
<comment type="subunit">
    <text evidence="4 5 6 8 9">Forms homohexamers (PubMed:16492739, PubMed:17157300). The biotin-dependent acyl-CoA carboxylase complex is composed of AccA3, which contains the biotin carboxylase (BC) and biotin carboxyl carrier protein (BCCP) domains, and AccD5, which contains the carboxyl transferase (CT) domain (PubMed:16354663, PubMed:16385038). The AccA3/AccD5 complex forms a dodecamer, and can associate with the epsilon subunit AccE5 (Rv3280), which stimulates carboxylation by the complex (PubMed:16354663, PubMed:16385038). Is also part of the long-chain acyl-CoA carboxylase (LCC) complex, which is composed of AccA3, AccD4, AccD5 and AccE5. The four subunits are essential for activity, but AccD5, together with AccE5, probably plays a structural role rather than a catalytic one (PubMed:28222482).</text>
</comment>
<comment type="interaction">
    <interactant intactId="EBI-7151762">
        <id>P9WQH7</id>
    </interactant>
    <interactant intactId="EBI-7151762">
        <id>P9WQH7</id>
        <label>accD5</label>
    </interactant>
    <organismsDiffer>false</organismsDiffer>
    <experiments>2</experiments>
</comment>
<comment type="induction">
    <text evidence="7">Expressed at higher levels during the exponential growth phase.</text>
</comment>
<comment type="similarity">
    <text evidence="11">Belongs to the AccD/PCCB family.</text>
</comment>
<reference key="1">
    <citation type="journal article" date="1998" name="Nature">
        <title>Deciphering the biology of Mycobacterium tuberculosis from the complete genome sequence.</title>
        <authorList>
            <person name="Cole S.T."/>
            <person name="Brosch R."/>
            <person name="Parkhill J."/>
            <person name="Garnier T."/>
            <person name="Churcher C.M."/>
            <person name="Harris D.E."/>
            <person name="Gordon S.V."/>
            <person name="Eiglmeier K."/>
            <person name="Gas S."/>
            <person name="Barry C.E. III"/>
            <person name="Tekaia F."/>
            <person name="Badcock K."/>
            <person name="Basham D."/>
            <person name="Brown D."/>
            <person name="Chillingworth T."/>
            <person name="Connor R."/>
            <person name="Davies R.M."/>
            <person name="Devlin K."/>
            <person name="Feltwell T."/>
            <person name="Gentles S."/>
            <person name="Hamlin N."/>
            <person name="Holroyd S."/>
            <person name="Hornsby T."/>
            <person name="Jagels K."/>
            <person name="Krogh A."/>
            <person name="McLean J."/>
            <person name="Moule S."/>
            <person name="Murphy L.D."/>
            <person name="Oliver S."/>
            <person name="Osborne J."/>
            <person name="Quail M.A."/>
            <person name="Rajandream M.A."/>
            <person name="Rogers J."/>
            <person name="Rutter S."/>
            <person name="Seeger K."/>
            <person name="Skelton S."/>
            <person name="Squares S."/>
            <person name="Squares R."/>
            <person name="Sulston J.E."/>
            <person name="Taylor K."/>
            <person name="Whitehead S."/>
            <person name="Barrell B.G."/>
        </authorList>
    </citation>
    <scope>NUCLEOTIDE SEQUENCE [LARGE SCALE GENOMIC DNA]</scope>
    <source>
        <strain>ATCC 25618 / H37Rv</strain>
    </source>
</reference>
<reference key="2">
    <citation type="journal article" date="2006" name="J. Biol. Chem.">
        <title>Identification and characterization of Rv3281 as a novel subunit of a biotin-dependent acyl-CoA carboxylase in Mycobacterium tuberculosis H37Rv.</title>
        <authorList>
            <person name="Oh T.J."/>
            <person name="Daniel J."/>
            <person name="Kim H.J."/>
            <person name="Sirakova T.D."/>
            <person name="Kolattukudy P.E."/>
        </authorList>
    </citation>
    <scope>PROTEIN SEQUENCE OF 2-14</scope>
    <scope>FUNCTION</scope>
    <scope>CATALYTIC ACTIVITY</scope>
    <scope>ACTIVITY REGULATION</scope>
    <scope>BIOPHYSICOCHEMICAL PROPERTIES</scope>
    <scope>SUBUNIT</scope>
</reference>
<reference key="3">
    <citation type="journal article" date="2006" name="J. Bacteriol.">
        <title>Biochemical and structural characterization of an essential acyl coenzyme A carboxylase from Mycobacterium tuberculosis.</title>
        <authorList>
            <person name="Gago G."/>
            <person name="Kurth D."/>
            <person name="Diacovich L."/>
            <person name="Tsai S.C."/>
            <person name="Gramajo H."/>
        </authorList>
    </citation>
    <scope>FUNCTION</scope>
    <scope>CATALYTIC ACTIVITY</scope>
    <scope>ACTIVITY REGULATION</scope>
    <scope>PATHWAY</scope>
    <scope>SUBUNIT</scope>
</reference>
<reference key="4">
    <citation type="journal article" date="2007" name="J. Bacteriol.">
        <title>AccD6, a member of the Fas II locus, is a functional carboxyltransferase subunit of the acyl-coenzyme A carboxylase in Mycobacterium tuberculosis.</title>
        <authorList>
            <person name="Daniel J."/>
            <person name="Oh T.J."/>
            <person name="Lee C.M."/>
            <person name="Kolattukudy P.E."/>
        </authorList>
    </citation>
    <scope>INDUCTION</scope>
    <source>
        <strain>H37Rv</strain>
    </source>
</reference>
<reference key="5">
    <citation type="journal article" date="2011" name="Mol. Cell. Proteomics">
        <title>Proteogenomic analysis of Mycobacterium tuberculosis by high resolution mass spectrometry.</title>
        <authorList>
            <person name="Kelkar D.S."/>
            <person name="Kumar D."/>
            <person name="Kumar P."/>
            <person name="Balakrishnan L."/>
            <person name="Muthusamy B."/>
            <person name="Yadav A.K."/>
            <person name="Shrivastava P."/>
            <person name="Marimuthu A."/>
            <person name="Anand S."/>
            <person name="Sundaram H."/>
            <person name="Kingsbury R."/>
            <person name="Harsha H.C."/>
            <person name="Nair B."/>
            <person name="Prasad T.S."/>
            <person name="Chauhan D.S."/>
            <person name="Katoch K."/>
            <person name="Katoch V.M."/>
            <person name="Kumar P."/>
            <person name="Chaerkady R."/>
            <person name="Ramachandran S."/>
            <person name="Dash D."/>
            <person name="Pandey A."/>
        </authorList>
    </citation>
    <scope>IDENTIFICATION BY MASS SPECTROMETRY [LARGE SCALE ANALYSIS]</scope>
    <source>
        <strain>ATCC 25618 / H37Rv</strain>
    </source>
</reference>
<reference key="6">
    <citation type="journal article" date="2017" name="FEBS J.">
        <title>Functional reconstitution of the Mycobacterium tuberculosis long-chain acyl-CoA carboxylase from multiple acyl-CoA subunits.</title>
        <authorList>
            <person name="Bazet Lyonnet B."/>
            <person name="Diacovich L."/>
            <person name="Gago G."/>
            <person name="Spina L."/>
            <person name="Bardou F."/>
            <person name="Lemassu A."/>
            <person name="Quemard A."/>
            <person name="Gramajo H."/>
        </authorList>
    </citation>
    <scope>FUNCTION</scope>
    <scope>CATALYTIC ACTIVITY</scope>
    <scope>SUBUNIT</scope>
    <scope>PATHWAY</scope>
</reference>
<reference evidence="14" key="7">
    <citation type="journal article" date="2006" name="Proc. Natl. Acad. Sci. U.S.A.">
        <title>Structure-based inhibitor design of AccD5, an essential acyl-CoA carboxylase carboxyltransferase domain of Mycobacterium tuberculosis.</title>
        <authorList>
            <person name="Lin T.W."/>
            <person name="Melgar M.M."/>
            <person name="Kurth D."/>
            <person name="Swamidass S.J."/>
            <person name="Purdon J."/>
            <person name="Tseng T."/>
            <person name="Gago G."/>
            <person name="Baldi P."/>
            <person name="Gramajo H."/>
            <person name="Tsai S.C."/>
        </authorList>
    </citation>
    <scope>X-RAY CRYSTALLOGRAPHY (2.90 ANGSTROMS)</scope>
    <scope>STRUCTURE-BASED INHIBITOR DESIGN</scope>
    <scope>SUBUNIT</scope>
</reference>
<reference evidence="15" key="8">
    <citation type="journal article" date="2006" name="FEBS Lett.">
        <title>Structural diversity in the six-fold redundant set of acyl-CoA carboxyltransferases in Mycobacterium tuberculosis.</title>
        <authorList>
            <person name="Holton S.J."/>
            <person name="King-Scott S."/>
            <person name="Nasser Eddine A."/>
            <person name="Kaufmann S.H."/>
            <person name="Wilmanns M."/>
        </authorList>
    </citation>
    <scope>X-RAY CRYSTALLOGRAPHY (2.20 ANGSTROMS)</scope>
    <scope>SUBUNIT</scope>
    <source>
        <strain>H37Rv</strain>
    </source>
</reference>
<feature type="initiator methionine" description="Removed" evidence="4">
    <location>
        <position position="1"/>
    </location>
</feature>
<feature type="chain" id="PRO_0000199799" description="Biotin-dependent acetyl-/propionyl-coenzyme A carboxylase beta5 subunit">
    <location>
        <begin position="2"/>
        <end position="548"/>
    </location>
</feature>
<feature type="domain" description="CoA carboxyltransferase N-terminal" evidence="1">
    <location>
        <begin position="25"/>
        <end position="281"/>
    </location>
</feature>
<feature type="domain" description="CoA carboxyltransferase C-terminal" evidence="2">
    <location>
        <begin position="295"/>
        <end position="541"/>
    </location>
</feature>
<feature type="region of interest" description="Disordered" evidence="3">
    <location>
        <begin position="1"/>
        <end position="23"/>
    </location>
</feature>
<feature type="compositionally biased region" description="Basic and acidic residues" evidence="3">
    <location>
        <begin position="7"/>
        <end position="21"/>
    </location>
</feature>
<feature type="helix" evidence="17">
    <location>
        <begin position="25"/>
        <end position="39"/>
    </location>
</feature>
<feature type="helix" evidence="17">
    <location>
        <begin position="45"/>
        <end position="53"/>
    </location>
</feature>
<feature type="helix" evidence="17">
    <location>
        <begin position="59"/>
        <end position="66"/>
    </location>
</feature>
<feature type="strand" evidence="17">
    <location>
        <begin position="73"/>
        <end position="76"/>
    </location>
</feature>
<feature type="helix" evidence="17">
    <location>
        <begin position="88"/>
        <end position="90"/>
    </location>
</feature>
<feature type="turn" evidence="17">
    <location>
        <begin position="94"/>
        <end position="97"/>
    </location>
</feature>
<feature type="strand" evidence="17">
    <location>
        <begin position="98"/>
        <end position="105"/>
    </location>
</feature>
<feature type="strand" evidence="17">
    <location>
        <begin position="108"/>
        <end position="115"/>
    </location>
</feature>
<feature type="helix" evidence="17">
    <location>
        <begin position="120"/>
        <end position="122"/>
    </location>
</feature>
<feature type="helix" evidence="17">
    <location>
        <begin position="126"/>
        <end position="142"/>
    </location>
</feature>
<feature type="strand" evidence="17">
    <location>
        <begin position="146"/>
        <end position="150"/>
    </location>
</feature>
<feature type="helix" evidence="17">
    <location>
        <begin position="157"/>
        <end position="161"/>
    </location>
</feature>
<feature type="helix" evidence="17">
    <location>
        <begin position="162"/>
        <end position="176"/>
    </location>
</feature>
<feature type="turn" evidence="17">
    <location>
        <begin position="177"/>
        <end position="180"/>
    </location>
</feature>
<feature type="strand" evidence="17">
    <location>
        <begin position="183"/>
        <end position="187"/>
    </location>
</feature>
<feature type="strand" evidence="17">
    <location>
        <begin position="189"/>
        <end position="193"/>
    </location>
</feature>
<feature type="helix" evidence="17">
    <location>
        <begin position="194"/>
        <end position="196"/>
    </location>
</feature>
<feature type="helix" evidence="17">
    <location>
        <begin position="197"/>
        <end position="201"/>
    </location>
</feature>
<feature type="strand" evidence="17">
    <location>
        <begin position="202"/>
        <end position="208"/>
    </location>
</feature>
<feature type="turn" evidence="17">
    <location>
        <begin position="209"/>
        <end position="211"/>
    </location>
</feature>
<feature type="strand" evidence="17">
    <location>
        <begin position="213"/>
        <end position="217"/>
    </location>
</feature>
<feature type="helix" evidence="17">
    <location>
        <begin position="219"/>
        <end position="226"/>
    </location>
</feature>
<feature type="helix" evidence="17">
    <location>
        <begin position="232"/>
        <end position="236"/>
    </location>
</feature>
<feature type="helix" evidence="17">
    <location>
        <begin position="238"/>
        <end position="243"/>
    </location>
</feature>
<feature type="strand" evidence="17">
    <location>
        <begin position="249"/>
        <end position="254"/>
    </location>
</feature>
<feature type="helix" evidence="17">
    <location>
        <begin position="255"/>
        <end position="266"/>
    </location>
</feature>
<feature type="helix" evidence="17">
    <location>
        <begin position="289"/>
        <end position="291"/>
    </location>
</feature>
<feature type="helix" evidence="17">
    <location>
        <begin position="295"/>
        <end position="299"/>
    </location>
</feature>
<feature type="helix" evidence="17">
    <location>
        <begin position="300"/>
        <end position="302"/>
    </location>
</feature>
<feature type="strand" evidence="16">
    <location>
        <begin position="306"/>
        <end position="309"/>
    </location>
</feature>
<feature type="helix" evidence="17">
    <location>
        <begin position="315"/>
        <end position="321"/>
    </location>
</feature>
<feature type="strand" evidence="17">
    <location>
        <begin position="322"/>
        <end position="324"/>
    </location>
</feature>
<feature type="strand" evidence="17">
    <location>
        <begin position="327"/>
        <end position="330"/>
    </location>
</feature>
<feature type="strand" evidence="17">
    <location>
        <begin position="337"/>
        <end position="344"/>
    </location>
</feature>
<feature type="strand" evidence="17">
    <location>
        <begin position="347"/>
        <end position="354"/>
    </location>
</feature>
<feature type="turn" evidence="16">
    <location>
        <begin position="356"/>
        <end position="358"/>
    </location>
</feature>
<feature type="helix" evidence="17">
    <location>
        <begin position="359"/>
        <end position="361"/>
    </location>
</feature>
<feature type="helix" evidence="17">
    <location>
        <begin position="365"/>
        <end position="380"/>
    </location>
</feature>
<feature type="strand" evidence="17">
    <location>
        <begin position="385"/>
        <end position="391"/>
    </location>
</feature>
<feature type="helix" evidence="17">
    <location>
        <begin position="398"/>
        <end position="402"/>
    </location>
</feature>
<feature type="helix" evidence="17">
    <location>
        <begin position="405"/>
        <end position="418"/>
    </location>
</feature>
<feature type="strand" evidence="17">
    <location>
        <begin position="423"/>
        <end position="432"/>
    </location>
</feature>
<feature type="helix" evidence="17">
    <location>
        <begin position="433"/>
        <end position="438"/>
    </location>
</feature>
<feature type="helix" evidence="17">
    <location>
        <begin position="442"/>
        <end position="444"/>
    </location>
</feature>
<feature type="strand" evidence="17">
    <location>
        <begin position="447"/>
        <end position="451"/>
    </location>
</feature>
<feature type="strand" evidence="17">
    <location>
        <begin position="456"/>
        <end position="460"/>
    </location>
</feature>
<feature type="helix" evidence="17">
    <location>
        <begin position="462"/>
        <end position="469"/>
    </location>
</feature>
<feature type="turn" evidence="16">
    <location>
        <begin position="470"/>
        <end position="475"/>
    </location>
</feature>
<feature type="helix" evidence="16">
    <location>
        <begin position="476"/>
        <end position="478"/>
    </location>
</feature>
<feature type="helix" evidence="17">
    <location>
        <begin position="485"/>
        <end position="499"/>
    </location>
</feature>
<feature type="strand" evidence="17">
    <location>
        <begin position="500"/>
        <end position="502"/>
    </location>
</feature>
<feature type="helix" evidence="17">
    <location>
        <begin position="503"/>
        <end position="507"/>
    </location>
</feature>
<feature type="strand" evidence="17">
    <location>
        <begin position="510"/>
        <end position="514"/>
    </location>
</feature>
<feature type="helix" evidence="17">
    <location>
        <begin position="517"/>
        <end position="519"/>
    </location>
</feature>
<feature type="helix" evidence="17">
    <location>
        <begin position="520"/>
        <end position="530"/>
    </location>
</feature>
<feature type="turn" evidence="17">
    <location>
        <begin position="531"/>
        <end position="533"/>
    </location>
</feature>